<feature type="chain" id="PRO_0000322182" description="Putative U-box domain-containing protein 42">
    <location>
        <begin position="1"/>
        <end position="1033"/>
    </location>
</feature>
<feature type="domain" description="U-box">
    <location>
        <begin position="245"/>
        <end position="322"/>
    </location>
</feature>
<feature type="repeat" description="ARM 1">
    <location>
        <begin position="483"/>
        <end position="522"/>
    </location>
</feature>
<feature type="repeat" description="ARM 2">
    <location>
        <begin position="523"/>
        <end position="562"/>
    </location>
</feature>
<feature type="repeat" description="ARM 3">
    <location>
        <begin position="564"/>
        <end position="608"/>
    </location>
</feature>
<feature type="repeat" description="ARM 4">
    <location>
        <begin position="610"/>
        <end position="659"/>
    </location>
</feature>
<feature type="repeat" description="ARM 5">
    <location>
        <begin position="665"/>
        <end position="704"/>
    </location>
</feature>
<feature type="region of interest" description="Disordered" evidence="2">
    <location>
        <begin position="145"/>
        <end position="226"/>
    </location>
</feature>
<feature type="compositionally biased region" description="Polar residues" evidence="2">
    <location>
        <begin position="200"/>
        <end position="226"/>
    </location>
</feature>
<proteinExistence type="inferred from homology"/>
<evidence type="ECO:0000250" key="1"/>
<evidence type="ECO:0000256" key="2">
    <source>
        <dbReference type="SAM" id="MobiDB-lite"/>
    </source>
</evidence>
<evidence type="ECO:0000305" key="3"/>
<sequence>MEIQTAESNVICSIDIFESLSDSVDVAKKLVEKSQESNEAESTTDLRSIEAGFEGVVKQMGETLQSIPESTFDEEEYIGVVIQSLSNEMQNATIGDGSKSEMINNGQQKISAKHTPDIVSEQMEEDLYPTDPEFSYESYMMYSESQSQMTDIPDIPSKSTDVSRQRKHGNHSESQSLVTEIPDIPSQSTNVSSQRKHGNLSKSQSQSTEIPDIPSQSSNASSQRKYGNLSESLSMLPQVTQFMEPPYQAFICPLTKEIMEDPVTTETGVTCERQAVIEWFDSFGNSDEINCPVTGQKLTTELSANVVLKTIIQEWKVRNEAARIKVAHAALSLGGSESMVIDALRDLQMTCEGKEYNKVQVREAGIIQLLDRYLTYRSKDVRFELLKFLRTLADEETDDGKEMIVKTITMSCVIKLLGSSHQPVRHAAQALLLELSKSQHACEKIGTARGAILMLVTAKYNRELDSFASETSDQILRNLEKCPENIKQMAESGLLEPLLGHLAEGSEETQVAMAAYLVEIDIGHEKKTYVAEKACPALIGLVQSENIDARRAAFKALAHISLYHPNNKILVEVGIIKIMVEEMFTKRVFSDLMNSRNEAATILANILESGLEHETFEVNTHGHTLGSDYFVYNIIHMLKNSSPDDLNIDLIRILLSLSKSPRAMATIVSVIKETDASFAMIELINNPHDELGVGALKLLIALTPYIGHTLSERLCKTRGQPENLIQCPVEANQITEKHAVSAKLLAKLPHQNLTLNLALVNESIVSEILHAIHLIQRSGARTSRYATDFLEGLVGILVRFTTTLYEPQMMYLARNHDLTSVFVDLLMKTSSDEVQRLSATGLENLSSTTMTLSRPPQPRSTKFMGSLSMPRSFSLRSSKKKQIEICAIHRGVCSAKNTFCLVEANAITKLLACLQSDKVEVVESALAAICTLLDDKVEVEKSLSMLSEMNAVQLILNAVKEHKKESLLQKAFWMIDKFIIRGGDKYASEISQDRMLSGMLVSAFHRGDGNTRQMAENILRRLDKMPSFSTYIT</sequence>
<reference key="1">
    <citation type="journal article" date="2000" name="Nature">
        <title>Sequence and analysis of chromosome 1 of the plant Arabidopsis thaliana.</title>
        <authorList>
            <person name="Theologis A."/>
            <person name="Ecker J.R."/>
            <person name="Palm C.J."/>
            <person name="Federspiel N.A."/>
            <person name="Kaul S."/>
            <person name="White O."/>
            <person name="Alonso J."/>
            <person name="Altafi H."/>
            <person name="Araujo R."/>
            <person name="Bowman C.L."/>
            <person name="Brooks S.Y."/>
            <person name="Buehler E."/>
            <person name="Chan A."/>
            <person name="Chao Q."/>
            <person name="Chen H."/>
            <person name="Cheuk R.F."/>
            <person name="Chin C.W."/>
            <person name="Chung M.K."/>
            <person name="Conn L."/>
            <person name="Conway A.B."/>
            <person name="Conway A.R."/>
            <person name="Creasy T.H."/>
            <person name="Dewar K."/>
            <person name="Dunn P."/>
            <person name="Etgu P."/>
            <person name="Feldblyum T.V."/>
            <person name="Feng J.-D."/>
            <person name="Fong B."/>
            <person name="Fujii C.Y."/>
            <person name="Gill J.E."/>
            <person name="Goldsmith A.D."/>
            <person name="Haas B."/>
            <person name="Hansen N.F."/>
            <person name="Hughes B."/>
            <person name="Huizar L."/>
            <person name="Hunter J.L."/>
            <person name="Jenkins J."/>
            <person name="Johnson-Hopson C."/>
            <person name="Khan S."/>
            <person name="Khaykin E."/>
            <person name="Kim C.J."/>
            <person name="Koo H.L."/>
            <person name="Kremenetskaia I."/>
            <person name="Kurtz D.B."/>
            <person name="Kwan A."/>
            <person name="Lam B."/>
            <person name="Langin-Hooper S."/>
            <person name="Lee A."/>
            <person name="Lee J.M."/>
            <person name="Lenz C.A."/>
            <person name="Li J.H."/>
            <person name="Li Y.-P."/>
            <person name="Lin X."/>
            <person name="Liu S.X."/>
            <person name="Liu Z.A."/>
            <person name="Luros J.S."/>
            <person name="Maiti R."/>
            <person name="Marziali A."/>
            <person name="Militscher J."/>
            <person name="Miranda M."/>
            <person name="Nguyen M."/>
            <person name="Nierman W.C."/>
            <person name="Osborne B.I."/>
            <person name="Pai G."/>
            <person name="Peterson J."/>
            <person name="Pham P.K."/>
            <person name="Rizzo M."/>
            <person name="Rooney T."/>
            <person name="Rowley D."/>
            <person name="Sakano H."/>
            <person name="Salzberg S.L."/>
            <person name="Schwartz J.R."/>
            <person name="Shinn P."/>
            <person name="Southwick A.M."/>
            <person name="Sun H."/>
            <person name="Tallon L.J."/>
            <person name="Tambunga G."/>
            <person name="Toriumi M.J."/>
            <person name="Town C.D."/>
            <person name="Utterback T."/>
            <person name="Van Aken S."/>
            <person name="Vaysberg M."/>
            <person name="Vysotskaia V.S."/>
            <person name="Walker M."/>
            <person name="Wu D."/>
            <person name="Yu G."/>
            <person name="Fraser C.M."/>
            <person name="Venter J.C."/>
            <person name="Davis R.W."/>
        </authorList>
    </citation>
    <scope>NUCLEOTIDE SEQUENCE [LARGE SCALE GENOMIC DNA]</scope>
    <source>
        <strain>cv. Columbia</strain>
    </source>
</reference>
<reference key="2">
    <citation type="journal article" date="2017" name="Plant J.">
        <title>Araport11: a complete reannotation of the Arabidopsis thaliana reference genome.</title>
        <authorList>
            <person name="Cheng C.Y."/>
            <person name="Krishnakumar V."/>
            <person name="Chan A.P."/>
            <person name="Thibaud-Nissen F."/>
            <person name="Schobel S."/>
            <person name="Town C.D."/>
        </authorList>
    </citation>
    <scope>GENOME REANNOTATION</scope>
    <source>
        <strain>cv. Columbia</strain>
    </source>
</reference>
<reference key="3">
    <citation type="journal article" date="2004" name="Plant Physiol.">
        <title>A large complement of the predicted Arabidopsis ARM repeat proteins are members of the U-box E3 ubiquitin ligase family.</title>
        <authorList>
            <person name="Mudgil Y."/>
            <person name="Shiu S.-H."/>
            <person name="Stone S.L."/>
            <person name="Salt J.N."/>
            <person name="Goring D.R."/>
        </authorList>
    </citation>
    <scope>GENE FAMILY ORGANIZATION</scope>
</reference>
<dbReference type="EC" id="2.3.2.27"/>
<dbReference type="EMBL" id="AC011665">
    <property type="protein sequence ID" value="AAG51587.1"/>
    <property type="molecule type" value="Genomic_DNA"/>
</dbReference>
<dbReference type="EMBL" id="CP002684">
    <property type="status" value="NOT_ANNOTATED_CDS"/>
    <property type="molecule type" value="Genomic_DNA"/>
</dbReference>
<dbReference type="PIR" id="A96714">
    <property type="entry name" value="A96714"/>
</dbReference>
<dbReference type="STRING" id="3702.Q9CAA7"/>
<dbReference type="PaxDb" id="3702-AT1G68940.3"/>
<dbReference type="Araport" id="AT1G68940"/>
<dbReference type="TAIR" id="AT1G68940"/>
<dbReference type="eggNOG" id="KOG0167">
    <property type="taxonomic scope" value="Eukaryota"/>
</dbReference>
<dbReference type="eggNOG" id="KOG1072">
    <property type="taxonomic scope" value="Eukaryota"/>
</dbReference>
<dbReference type="HOGENOM" id="CLU_004912_0_0_1"/>
<dbReference type="InParanoid" id="Q9CAA7"/>
<dbReference type="PhylomeDB" id="Q9CAA7"/>
<dbReference type="UniPathway" id="UPA00143"/>
<dbReference type="PRO" id="PR:Q9CAA7"/>
<dbReference type="Proteomes" id="UP000006548">
    <property type="component" value="Chromosome 1"/>
</dbReference>
<dbReference type="ExpressionAtlas" id="Q9CAA7">
    <property type="expression patterns" value="baseline and differential"/>
</dbReference>
<dbReference type="GO" id="GO:0004842">
    <property type="term" value="F:ubiquitin-protein transferase activity"/>
    <property type="evidence" value="ECO:0007669"/>
    <property type="project" value="InterPro"/>
</dbReference>
<dbReference type="GO" id="GO:0016567">
    <property type="term" value="P:protein ubiquitination"/>
    <property type="evidence" value="ECO:0007669"/>
    <property type="project" value="UniProtKB-UniPathway"/>
</dbReference>
<dbReference type="CDD" id="cd16664">
    <property type="entry name" value="RING-Ubox_PUB"/>
    <property type="match status" value="1"/>
</dbReference>
<dbReference type="Gene3D" id="1.25.10.10">
    <property type="entry name" value="Leucine-rich Repeat Variant"/>
    <property type="match status" value="3"/>
</dbReference>
<dbReference type="Gene3D" id="3.30.40.10">
    <property type="entry name" value="Zinc/RING finger domain, C3HC4 (zinc finger)"/>
    <property type="match status" value="1"/>
</dbReference>
<dbReference type="InterPro" id="IPR011989">
    <property type="entry name" value="ARM-like"/>
</dbReference>
<dbReference type="InterPro" id="IPR016024">
    <property type="entry name" value="ARM-type_fold"/>
</dbReference>
<dbReference type="InterPro" id="IPR000225">
    <property type="entry name" value="Armadillo"/>
</dbReference>
<dbReference type="InterPro" id="IPR045210">
    <property type="entry name" value="RING-Ubox_PUB"/>
</dbReference>
<dbReference type="InterPro" id="IPR052608">
    <property type="entry name" value="U-box_domain_protein"/>
</dbReference>
<dbReference type="InterPro" id="IPR003613">
    <property type="entry name" value="Ubox_domain"/>
</dbReference>
<dbReference type="InterPro" id="IPR013083">
    <property type="entry name" value="Znf_RING/FYVE/PHD"/>
</dbReference>
<dbReference type="PANTHER" id="PTHR45958">
    <property type="entry name" value="RING-TYPE E3 UBIQUITIN TRANSFERASE"/>
    <property type="match status" value="1"/>
</dbReference>
<dbReference type="PANTHER" id="PTHR45958:SF4">
    <property type="entry name" value="U-BOX DOMAIN-CONTAINING PROTEIN 42-RELATED"/>
    <property type="match status" value="1"/>
</dbReference>
<dbReference type="Pfam" id="PF00514">
    <property type="entry name" value="Arm"/>
    <property type="match status" value="1"/>
</dbReference>
<dbReference type="Pfam" id="PF04564">
    <property type="entry name" value="U-box"/>
    <property type="match status" value="1"/>
</dbReference>
<dbReference type="SMART" id="SM00185">
    <property type="entry name" value="ARM"/>
    <property type="match status" value="6"/>
</dbReference>
<dbReference type="SMART" id="SM00504">
    <property type="entry name" value="Ubox"/>
    <property type="match status" value="1"/>
</dbReference>
<dbReference type="SUPFAM" id="SSF48371">
    <property type="entry name" value="ARM repeat"/>
    <property type="match status" value="2"/>
</dbReference>
<dbReference type="SUPFAM" id="SSF57850">
    <property type="entry name" value="RING/U-box"/>
    <property type="match status" value="1"/>
</dbReference>
<dbReference type="PROSITE" id="PS51698">
    <property type="entry name" value="U_BOX"/>
    <property type="match status" value="1"/>
</dbReference>
<gene>
    <name type="primary">PUB42</name>
    <name type="ordered locus">At1g68940</name>
    <name type="ORF">T6L1.12</name>
</gene>
<keyword id="KW-0025">Alternative splicing</keyword>
<keyword id="KW-1185">Reference proteome</keyword>
<keyword id="KW-0677">Repeat</keyword>
<keyword id="KW-0808">Transferase</keyword>
<keyword id="KW-0833">Ubl conjugation pathway</keyword>
<protein>
    <recommendedName>
        <fullName>Putative U-box domain-containing protein 42</fullName>
        <ecNumber>2.3.2.27</ecNumber>
    </recommendedName>
    <alternativeName>
        <fullName>Plant U-box protein 42</fullName>
    </alternativeName>
    <alternativeName>
        <fullName evidence="3">RING-type E3 ubiquitin transferase PUB42</fullName>
    </alternativeName>
</protein>
<organism>
    <name type="scientific">Arabidopsis thaliana</name>
    <name type="common">Mouse-ear cress</name>
    <dbReference type="NCBI Taxonomy" id="3702"/>
    <lineage>
        <taxon>Eukaryota</taxon>
        <taxon>Viridiplantae</taxon>
        <taxon>Streptophyta</taxon>
        <taxon>Embryophyta</taxon>
        <taxon>Tracheophyta</taxon>
        <taxon>Spermatophyta</taxon>
        <taxon>Magnoliopsida</taxon>
        <taxon>eudicotyledons</taxon>
        <taxon>Gunneridae</taxon>
        <taxon>Pentapetalae</taxon>
        <taxon>rosids</taxon>
        <taxon>malvids</taxon>
        <taxon>Brassicales</taxon>
        <taxon>Brassicaceae</taxon>
        <taxon>Camelineae</taxon>
        <taxon>Arabidopsis</taxon>
    </lineage>
</organism>
<name>PUB42_ARATH</name>
<accession>Q9CAA7</accession>
<comment type="function">
    <text evidence="1">Functions as an E3 ubiquitin ligase.</text>
</comment>
<comment type="catalytic activity">
    <reaction>
        <text>S-ubiquitinyl-[E2 ubiquitin-conjugating enzyme]-L-cysteine + [acceptor protein]-L-lysine = [E2 ubiquitin-conjugating enzyme]-L-cysteine + N(6)-ubiquitinyl-[acceptor protein]-L-lysine.</text>
        <dbReference type="EC" id="2.3.2.27"/>
    </reaction>
</comment>
<comment type="pathway">
    <text>Protein modification; protein ubiquitination.</text>
</comment>
<comment type="alternative products">
    <event type="alternative splicing"/>
    <isoform>
        <id>Q9CAA7-1</id>
        <name>1</name>
        <sequence type="displayed"/>
    </isoform>
    <text>A number of isoforms are produced. According to EST sequences.</text>
</comment>